<name>COAD_SHEB5</name>
<dbReference type="EC" id="2.7.7.3" evidence="1"/>
<dbReference type="EMBL" id="CP000563">
    <property type="protein sequence ID" value="ABN59604.1"/>
    <property type="molecule type" value="Genomic_DNA"/>
</dbReference>
<dbReference type="RefSeq" id="WP_006079385.1">
    <property type="nucleotide sequence ID" value="NC_009052.1"/>
</dbReference>
<dbReference type="SMR" id="A3CYP1"/>
<dbReference type="STRING" id="325240.Sbal_0068"/>
<dbReference type="KEGG" id="sbl:Sbal_0068"/>
<dbReference type="HOGENOM" id="CLU_100149_0_1_6"/>
<dbReference type="OrthoDB" id="9806661at2"/>
<dbReference type="UniPathway" id="UPA00241">
    <property type="reaction ID" value="UER00355"/>
</dbReference>
<dbReference type="Proteomes" id="UP000001557">
    <property type="component" value="Chromosome"/>
</dbReference>
<dbReference type="GO" id="GO:0005737">
    <property type="term" value="C:cytoplasm"/>
    <property type="evidence" value="ECO:0007669"/>
    <property type="project" value="UniProtKB-SubCell"/>
</dbReference>
<dbReference type="GO" id="GO:0005524">
    <property type="term" value="F:ATP binding"/>
    <property type="evidence" value="ECO:0007669"/>
    <property type="project" value="UniProtKB-KW"/>
</dbReference>
<dbReference type="GO" id="GO:0004595">
    <property type="term" value="F:pantetheine-phosphate adenylyltransferase activity"/>
    <property type="evidence" value="ECO:0007669"/>
    <property type="project" value="UniProtKB-UniRule"/>
</dbReference>
<dbReference type="GO" id="GO:0015937">
    <property type="term" value="P:coenzyme A biosynthetic process"/>
    <property type="evidence" value="ECO:0007669"/>
    <property type="project" value="UniProtKB-UniRule"/>
</dbReference>
<dbReference type="CDD" id="cd02163">
    <property type="entry name" value="PPAT"/>
    <property type="match status" value="1"/>
</dbReference>
<dbReference type="FunFam" id="3.40.50.620:FF:000012">
    <property type="entry name" value="Phosphopantetheine adenylyltransferase"/>
    <property type="match status" value="1"/>
</dbReference>
<dbReference type="Gene3D" id="3.40.50.620">
    <property type="entry name" value="HUPs"/>
    <property type="match status" value="1"/>
</dbReference>
<dbReference type="HAMAP" id="MF_00151">
    <property type="entry name" value="PPAT_bact"/>
    <property type="match status" value="1"/>
</dbReference>
<dbReference type="InterPro" id="IPR004821">
    <property type="entry name" value="Cyt_trans-like"/>
</dbReference>
<dbReference type="InterPro" id="IPR001980">
    <property type="entry name" value="PPAT"/>
</dbReference>
<dbReference type="InterPro" id="IPR014729">
    <property type="entry name" value="Rossmann-like_a/b/a_fold"/>
</dbReference>
<dbReference type="NCBIfam" id="TIGR01510">
    <property type="entry name" value="coaD_prev_kdtB"/>
    <property type="match status" value="1"/>
</dbReference>
<dbReference type="NCBIfam" id="TIGR00125">
    <property type="entry name" value="cyt_tran_rel"/>
    <property type="match status" value="1"/>
</dbReference>
<dbReference type="PANTHER" id="PTHR21342">
    <property type="entry name" value="PHOSPHOPANTETHEINE ADENYLYLTRANSFERASE"/>
    <property type="match status" value="1"/>
</dbReference>
<dbReference type="PANTHER" id="PTHR21342:SF1">
    <property type="entry name" value="PHOSPHOPANTETHEINE ADENYLYLTRANSFERASE"/>
    <property type="match status" value="1"/>
</dbReference>
<dbReference type="Pfam" id="PF01467">
    <property type="entry name" value="CTP_transf_like"/>
    <property type="match status" value="1"/>
</dbReference>
<dbReference type="PRINTS" id="PR01020">
    <property type="entry name" value="LPSBIOSNTHSS"/>
</dbReference>
<dbReference type="SUPFAM" id="SSF52374">
    <property type="entry name" value="Nucleotidylyl transferase"/>
    <property type="match status" value="1"/>
</dbReference>
<organism>
    <name type="scientific">Shewanella baltica (strain OS155 / ATCC BAA-1091)</name>
    <dbReference type="NCBI Taxonomy" id="325240"/>
    <lineage>
        <taxon>Bacteria</taxon>
        <taxon>Pseudomonadati</taxon>
        <taxon>Pseudomonadota</taxon>
        <taxon>Gammaproteobacteria</taxon>
        <taxon>Alteromonadales</taxon>
        <taxon>Shewanellaceae</taxon>
        <taxon>Shewanella</taxon>
    </lineage>
</organism>
<protein>
    <recommendedName>
        <fullName evidence="1">Phosphopantetheine adenylyltransferase</fullName>
        <ecNumber evidence="1">2.7.7.3</ecNumber>
    </recommendedName>
    <alternativeName>
        <fullName evidence="1">Dephospho-CoA pyrophosphorylase</fullName>
    </alternativeName>
    <alternativeName>
        <fullName evidence="1">Pantetheine-phosphate adenylyltransferase</fullName>
        <shortName evidence="1">PPAT</shortName>
    </alternativeName>
</protein>
<accession>A3CYP1</accession>
<evidence type="ECO:0000255" key="1">
    <source>
        <dbReference type="HAMAP-Rule" id="MF_00151"/>
    </source>
</evidence>
<comment type="function">
    <text evidence="1">Reversibly transfers an adenylyl group from ATP to 4'-phosphopantetheine, yielding dephospho-CoA (dPCoA) and pyrophosphate.</text>
</comment>
<comment type="catalytic activity">
    <reaction evidence="1">
        <text>(R)-4'-phosphopantetheine + ATP + H(+) = 3'-dephospho-CoA + diphosphate</text>
        <dbReference type="Rhea" id="RHEA:19801"/>
        <dbReference type="ChEBI" id="CHEBI:15378"/>
        <dbReference type="ChEBI" id="CHEBI:30616"/>
        <dbReference type="ChEBI" id="CHEBI:33019"/>
        <dbReference type="ChEBI" id="CHEBI:57328"/>
        <dbReference type="ChEBI" id="CHEBI:61723"/>
        <dbReference type="EC" id="2.7.7.3"/>
    </reaction>
</comment>
<comment type="cofactor">
    <cofactor evidence="1">
        <name>Mg(2+)</name>
        <dbReference type="ChEBI" id="CHEBI:18420"/>
    </cofactor>
</comment>
<comment type="pathway">
    <text evidence="1">Cofactor biosynthesis; coenzyme A biosynthesis; CoA from (R)-pantothenate: step 4/5.</text>
</comment>
<comment type="subunit">
    <text evidence="1">Homohexamer.</text>
</comment>
<comment type="subcellular location">
    <subcellularLocation>
        <location evidence="1">Cytoplasm</location>
    </subcellularLocation>
</comment>
<comment type="similarity">
    <text evidence="1">Belongs to the bacterial CoaD family.</text>
</comment>
<gene>
    <name evidence="1" type="primary">coaD</name>
    <name type="ordered locus">Sbal_0068</name>
</gene>
<proteinExistence type="inferred from homology"/>
<feature type="chain" id="PRO_1000011228" description="Phosphopantetheine adenylyltransferase">
    <location>
        <begin position="1"/>
        <end position="163"/>
    </location>
</feature>
<feature type="binding site" evidence="1">
    <location>
        <begin position="10"/>
        <end position="11"/>
    </location>
    <ligand>
        <name>ATP</name>
        <dbReference type="ChEBI" id="CHEBI:30616"/>
    </ligand>
</feature>
<feature type="binding site" evidence="1">
    <location>
        <position position="10"/>
    </location>
    <ligand>
        <name>substrate</name>
    </ligand>
</feature>
<feature type="binding site" evidence="1">
    <location>
        <position position="18"/>
    </location>
    <ligand>
        <name>ATP</name>
        <dbReference type="ChEBI" id="CHEBI:30616"/>
    </ligand>
</feature>
<feature type="binding site" evidence="1">
    <location>
        <position position="42"/>
    </location>
    <ligand>
        <name>substrate</name>
    </ligand>
</feature>
<feature type="binding site" evidence="1">
    <location>
        <position position="74"/>
    </location>
    <ligand>
        <name>substrate</name>
    </ligand>
</feature>
<feature type="binding site" evidence="1">
    <location>
        <position position="88"/>
    </location>
    <ligand>
        <name>substrate</name>
    </ligand>
</feature>
<feature type="binding site" evidence="1">
    <location>
        <begin position="89"/>
        <end position="91"/>
    </location>
    <ligand>
        <name>ATP</name>
        <dbReference type="ChEBI" id="CHEBI:30616"/>
    </ligand>
</feature>
<feature type="binding site" evidence="1">
    <location>
        <position position="99"/>
    </location>
    <ligand>
        <name>ATP</name>
        <dbReference type="ChEBI" id="CHEBI:30616"/>
    </ligand>
</feature>
<feature type="binding site" evidence="1">
    <location>
        <begin position="124"/>
        <end position="130"/>
    </location>
    <ligand>
        <name>ATP</name>
        <dbReference type="ChEBI" id="CHEBI:30616"/>
    </ligand>
</feature>
<feature type="site" description="Transition state stabilizer" evidence="1">
    <location>
        <position position="18"/>
    </location>
</feature>
<sequence length="163" mass="17966">MHTRAIYPGTFDPITNGHADLIERAAKLFKHVVIGIAANPSKQPRFTLEERVELVNRVTAHLDNVEVVGFSGLLVDFAKEQKASVLVRGLRAVSDFEYEFQLANMNRRLSPDLESVFLTPAEENSFISSTLVKEVALHGGDVNQFVHSEVATALAAKLKLAKP</sequence>
<keyword id="KW-0067">ATP-binding</keyword>
<keyword id="KW-0173">Coenzyme A biosynthesis</keyword>
<keyword id="KW-0963">Cytoplasm</keyword>
<keyword id="KW-0460">Magnesium</keyword>
<keyword id="KW-0547">Nucleotide-binding</keyword>
<keyword id="KW-0548">Nucleotidyltransferase</keyword>
<keyword id="KW-1185">Reference proteome</keyword>
<keyword id="KW-0808">Transferase</keyword>
<reference key="1">
    <citation type="submission" date="2007-02" db="EMBL/GenBank/DDBJ databases">
        <title>Complete sequence of chromosome of Shewanella baltica OS155.</title>
        <authorList>
            <consortium name="US DOE Joint Genome Institute"/>
            <person name="Copeland A."/>
            <person name="Lucas S."/>
            <person name="Lapidus A."/>
            <person name="Barry K."/>
            <person name="Detter J.C."/>
            <person name="Glavina del Rio T."/>
            <person name="Hammon N."/>
            <person name="Israni S."/>
            <person name="Dalin E."/>
            <person name="Tice H."/>
            <person name="Pitluck S."/>
            <person name="Sims D.R."/>
            <person name="Brettin T."/>
            <person name="Bruce D."/>
            <person name="Han C."/>
            <person name="Tapia R."/>
            <person name="Brainard J."/>
            <person name="Schmutz J."/>
            <person name="Larimer F."/>
            <person name="Land M."/>
            <person name="Hauser L."/>
            <person name="Kyrpides N."/>
            <person name="Mikhailova N."/>
            <person name="Brettar I."/>
            <person name="Klappenbach J."/>
            <person name="Konstantinidis K."/>
            <person name="Rodrigues J."/>
            <person name="Tiedje J."/>
            <person name="Richardson P."/>
        </authorList>
    </citation>
    <scope>NUCLEOTIDE SEQUENCE [LARGE SCALE GENOMIC DNA]</scope>
    <source>
        <strain>OS155 / ATCC BAA-1091</strain>
    </source>
</reference>